<comment type="function">
    <text evidence="1">Located on the platform of the 30S subunit.</text>
</comment>
<comment type="subunit">
    <text evidence="1">Part of the 30S ribosomal subunit.</text>
</comment>
<comment type="similarity">
    <text evidence="1">Belongs to the universal ribosomal protein uS11 family.</text>
</comment>
<keyword id="KW-1185">Reference proteome</keyword>
<keyword id="KW-0687">Ribonucleoprotein</keyword>
<keyword id="KW-0689">Ribosomal protein</keyword>
<keyword id="KW-0694">RNA-binding</keyword>
<keyword id="KW-0699">rRNA-binding</keyword>
<accession>Q18G55</accession>
<proteinExistence type="inferred from homology"/>
<protein>
    <recommendedName>
        <fullName evidence="1">Small ribosomal subunit protein uS11</fullName>
    </recommendedName>
    <alternativeName>
        <fullName evidence="2">30S ribosomal protein S11</fullName>
    </alternativeName>
</protein>
<sequence>MSESENTEKRWGVAHVHASFNNTLITVTDLTGAETIVKSSGGAVVKQNRDEASPYAAMQMAESVAEDIKAAGIDGLHVRVRGPGGNGNKSPGPGAQATIRALARAGLEIGRIEDVTPIPHDGTRAPKNSRL</sequence>
<organism>
    <name type="scientific">Haloquadratum walsbyi (strain DSM 16790 / HBSQ001)</name>
    <dbReference type="NCBI Taxonomy" id="362976"/>
    <lineage>
        <taxon>Archaea</taxon>
        <taxon>Methanobacteriati</taxon>
        <taxon>Methanobacteriota</taxon>
        <taxon>Stenosarchaea group</taxon>
        <taxon>Halobacteria</taxon>
        <taxon>Halobacteriales</taxon>
        <taxon>Haloferacaceae</taxon>
        <taxon>Haloquadratum</taxon>
    </lineage>
</organism>
<feature type="chain" id="PRO_0000294893" description="Small ribosomal subunit protein uS11">
    <location>
        <begin position="1"/>
        <end position="131"/>
    </location>
</feature>
<gene>
    <name evidence="1" type="primary">rps11</name>
    <name type="ordered locus">HQ_2942A</name>
</gene>
<dbReference type="EMBL" id="AM180088">
    <property type="protein sequence ID" value="CAJ53046.1"/>
    <property type="molecule type" value="Genomic_DNA"/>
</dbReference>
<dbReference type="RefSeq" id="WP_011572156.1">
    <property type="nucleotide sequence ID" value="NC_008212.1"/>
</dbReference>
<dbReference type="SMR" id="Q18G55"/>
<dbReference type="STRING" id="362976.HQ_2942A"/>
<dbReference type="GeneID" id="4194647"/>
<dbReference type="KEGG" id="hwa:HQ_2942A"/>
<dbReference type="eggNOG" id="arCOG04240">
    <property type="taxonomic scope" value="Archaea"/>
</dbReference>
<dbReference type="HOGENOM" id="CLU_072439_6_1_2"/>
<dbReference type="Proteomes" id="UP000001975">
    <property type="component" value="Chromosome"/>
</dbReference>
<dbReference type="GO" id="GO:1990904">
    <property type="term" value="C:ribonucleoprotein complex"/>
    <property type="evidence" value="ECO:0007669"/>
    <property type="project" value="UniProtKB-KW"/>
</dbReference>
<dbReference type="GO" id="GO:0005840">
    <property type="term" value="C:ribosome"/>
    <property type="evidence" value="ECO:0007669"/>
    <property type="project" value="UniProtKB-KW"/>
</dbReference>
<dbReference type="GO" id="GO:0019843">
    <property type="term" value="F:rRNA binding"/>
    <property type="evidence" value="ECO:0007669"/>
    <property type="project" value="UniProtKB-UniRule"/>
</dbReference>
<dbReference type="GO" id="GO:0003735">
    <property type="term" value="F:structural constituent of ribosome"/>
    <property type="evidence" value="ECO:0007669"/>
    <property type="project" value="InterPro"/>
</dbReference>
<dbReference type="GO" id="GO:0006412">
    <property type="term" value="P:translation"/>
    <property type="evidence" value="ECO:0007669"/>
    <property type="project" value="UniProtKB-UniRule"/>
</dbReference>
<dbReference type="FunFam" id="3.30.420.80:FF:000007">
    <property type="entry name" value="30S ribosomal protein S11"/>
    <property type="match status" value="1"/>
</dbReference>
<dbReference type="Gene3D" id="3.30.420.80">
    <property type="entry name" value="Ribosomal protein S11"/>
    <property type="match status" value="1"/>
</dbReference>
<dbReference type="HAMAP" id="MF_01310">
    <property type="entry name" value="Ribosomal_uS11"/>
    <property type="match status" value="1"/>
</dbReference>
<dbReference type="InterPro" id="IPR001971">
    <property type="entry name" value="Ribosomal_uS11"/>
</dbReference>
<dbReference type="InterPro" id="IPR019961">
    <property type="entry name" value="Ribosomal_uS11_archaeal"/>
</dbReference>
<dbReference type="InterPro" id="IPR018102">
    <property type="entry name" value="Ribosomal_uS11_CS"/>
</dbReference>
<dbReference type="InterPro" id="IPR036967">
    <property type="entry name" value="Ribosomal_uS11_sf"/>
</dbReference>
<dbReference type="NCBIfam" id="TIGR03628">
    <property type="entry name" value="arch_S11P"/>
    <property type="match status" value="1"/>
</dbReference>
<dbReference type="NCBIfam" id="NF007176">
    <property type="entry name" value="PRK09607.1"/>
    <property type="match status" value="1"/>
</dbReference>
<dbReference type="PANTHER" id="PTHR11759">
    <property type="entry name" value="40S RIBOSOMAL PROTEIN S14/30S RIBOSOMAL PROTEIN S11"/>
    <property type="match status" value="1"/>
</dbReference>
<dbReference type="Pfam" id="PF00411">
    <property type="entry name" value="Ribosomal_S11"/>
    <property type="match status" value="1"/>
</dbReference>
<dbReference type="PIRSF" id="PIRSF002131">
    <property type="entry name" value="Ribosomal_S11"/>
    <property type="match status" value="1"/>
</dbReference>
<dbReference type="SUPFAM" id="SSF53137">
    <property type="entry name" value="Translational machinery components"/>
    <property type="match status" value="1"/>
</dbReference>
<dbReference type="PROSITE" id="PS00054">
    <property type="entry name" value="RIBOSOMAL_S11"/>
    <property type="match status" value="1"/>
</dbReference>
<evidence type="ECO:0000255" key="1">
    <source>
        <dbReference type="HAMAP-Rule" id="MF_01310"/>
    </source>
</evidence>
<evidence type="ECO:0000305" key="2"/>
<reference key="1">
    <citation type="journal article" date="2006" name="BMC Genomics">
        <title>The genome of the square archaeon Haloquadratum walsbyi: life at the limits of water activity.</title>
        <authorList>
            <person name="Bolhuis H."/>
            <person name="Palm P."/>
            <person name="Wende A."/>
            <person name="Falb M."/>
            <person name="Rampp M."/>
            <person name="Rodriguez-Valera F."/>
            <person name="Pfeiffer F."/>
            <person name="Oesterhelt D."/>
        </authorList>
    </citation>
    <scope>NUCLEOTIDE SEQUENCE [LARGE SCALE GENOMIC DNA]</scope>
    <source>
        <strain>DSM 16790 / HBSQ001</strain>
    </source>
</reference>
<name>RS11_HALWD</name>